<comment type="function">
    <text evidence="1">Converts 2C-methyl-D-erythritol 2,4-cyclodiphosphate (ME-2,4cPP) into 1-hydroxy-2-methyl-2-(E)-butenyl 4-diphosphate.</text>
</comment>
<comment type="catalytic activity">
    <reaction evidence="1">
        <text>(2E)-4-hydroxy-3-methylbut-2-enyl diphosphate + oxidized [flavodoxin] + H2O + 2 H(+) = 2-C-methyl-D-erythritol 2,4-cyclic diphosphate + reduced [flavodoxin]</text>
        <dbReference type="Rhea" id="RHEA:43604"/>
        <dbReference type="Rhea" id="RHEA-COMP:10622"/>
        <dbReference type="Rhea" id="RHEA-COMP:10623"/>
        <dbReference type="ChEBI" id="CHEBI:15377"/>
        <dbReference type="ChEBI" id="CHEBI:15378"/>
        <dbReference type="ChEBI" id="CHEBI:57618"/>
        <dbReference type="ChEBI" id="CHEBI:58210"/>
        <dbReference type="ChEBI" id="CHEBI:58483"/>
        <dbReference type="ChEBI" id="CHEBI:128753"/>
        <dbReference type="EC" id="1.17.7.3"/>
    </reaction>
</comment>
<comment type="cofactor">
    <cofactor evidence="1">
        <name>[4Fe-4S] cluster</name>
        <dbReference type="ChEBI" id="CHEBI:49883"/>
    </cofactor>
    <text evidence="1">Binds 1 [4Fe-4S] cluster.</text>
</comment>
<comment type="pathway">
    <text evidence="1">Isoprenoid biosynthesis; isopentenyl diphosphate biosynthesis via DXP pathway; isopentenyl diphosphate from 1-deoxy-D-xylulose 5-phosphate: step 5/6.</text>
</comment>
<comment type="similarity">
    <text evidence="1">Belongs to the IspG family.</text>
</comment>
<sequence length="427" mass="45876">MDSVNIARRPTRLVRVGHVLVGSDAPVMVQSMTNTDTADAAGTAEQVYQLAQAGSEVVRITVNSPEAAARVAEIRQRLDDLGCDVPLVGDFHFNGDRLLKEFPDCARALAKYRINPGNVGKGAKGDDKFAFMIRTAMEHDKAVRIGVNWGSLDQALLARMMDANNRAANPLPLPKLMQEALIVSALESAEKAVEIGLSPDNIILSCKVSNVQDLISVYRELGGRCDYPLHLGLTEAGMGSKGIVASSAALAVLLQEGIGDTIRISLTPQPGEARTKEVVVAQELLQTMGLRSFTPLVTACPGCGRTTSTFFQELADHIQSYLRERMPVWRLQYPGVEDMKVAVMGCVVNGPGESKLADIGISLPGTGEVPVAPVYVDGQKDVTLKGDNIPAEFTAIVDNYVKTRYGEGGAKRREVASRTIPIRPVKA</sequence>
<reference key="1">
    <citation type="journal article" date="2003" name="Proc. Natl. Acad. Sci. U.S.A.">
        <title>The complete genome sequence of Chromobacterium violaceum reveals remarkable and exploitable bacterial adaptability.</title>
        <authorList>
            <person name="Vasconcelos A.T.R."/>
            <person name="de Almeida D.F."/>
            <person name="Hungria M."/>
            <person name="Guimaraes C.T."/>
            <person name="Antonio R.V."/>
            <person name="Almeida F.C."/>
            <person name="de Almeida L.G.P."/>
            <person name="de Almeida R."/>
            <person name="Alves-Gomes J.A."/>
            <person name="Andrade E.M."/>
            <person name="Araripe J."/>
            <person name="de Araujo M.F.F."/>
            <person name="Astolfi-Filho S."/>
            <person name="Azevedo V."/>
            <person name="Baptista A.J."/>
            <person name="Bataus L.A.M."/>
            <person name="Batista J.S."/>
            <person name="Belo A."/>
            <person name="van den Berg C."/>
            <person name="Bogo M."/>
            <person name="Bonatto S."/>
            <person name="Bordignon J."/>
            <person name="Brigido M.M."/>
            <person name="Brito C.A."/>
            <person name="Brocchi M."/>
            <person name="Burity H.A."/>
            <person name="Camargo A.A."/>
            <person name="Cardoso D.D.P."/>
            <person name="Carneiro N.P."/>
            <person name="Carraro D.M."/>
            <person name="Carvalho C.M.B."/>
            <person name="Cascardo J.C.M."/>
            <person name="Cavada B.S."/>
            <person name="Chueire L.M.O."/>
            <person name="Creczynski-Pasa T.B."/>
            <person name="Cunha-Junior N.C."/>
            <person name="Fagundes N."/>
            <person name="Falcao C.L."/>
            <person name="Fantinatti F."/>
            <person name="Farias I.P."/>
            <person name="Felipe M.S.S."/>
            <person name="Ferrari L.P."/>
            <person name="Ferro J.A."/>
            <person name="Ferro M.I.T."/>
            <person name="Franco G.R."/>
            <person name="Freitas N.S.A."/>
            <person name="Furlan L.R."/>
            <person name="Gazzinelli R.T."/>
            <person name="Gomes E.A."/>
            <person name="Goncalves P.R."/>
            <person name="Grangeiro T.B."/>
            <person name="Grattapaglia D."/>
            <person name="Grisard E.C."/>
            <person name="Hanna E.S."/>
            <person name="Jardim S.N."/>
            <person name="Laurino J."/>
            <person name="Leoi L.C.T."/>
            <person name="Lima L.F.A."/>
            <person name="Loureiro M.F."/>
            <person name="Lyra M.C.C.P."/>
            <person name="Madeira H.M.F."/>
            <person name="Manfio G.P."/>
            <person name="Maranhao A.Q."/>
            <person name="Martins W.S."/>
            <person name="di Mauro S.M.Z."/>
            <person name="de Medeiros S.R.B."/>
            <person name="Meissner R.V."/>
            <person name="Moreira M.A.M."/>
            <person name="Nascimento F.F."/>
            <person name="Nicolas M.F."/>
            <person name="Oliveira J.G."/>
            <person name="Oliveira S.C."/>
            <person name="Paixao R.F.C."/>
            <person name="Parente J.A."/>
            <person name="Pedrosa F.O."/>
            <person name="Pena S.D.J."/>
            <person name="Pereira J.O."/>
            <person name="Pereira M."/>
            <person name="Pinto L.S.R.C."/>
            <person name="Pinto L.S."/>
            <person name="Porto J.I.R."/>
            <person name="Potrich D.P."/>
            <person name="Ramalho-Neto C.E."/>
            <person name="Reis A.M.M."/>
            <person name="Rigo L.U."/>
            <person name="Rondinelli E."/>
            <person name="Santos E.B.P."/>
            <person name="Santos F.R."/>
            <person name="Schneider M.P.C."/>
            <person name="Seuanez H.N."/>
            <person name="Silva A.M.R."/>
            <person name="da Silva A.L.C."/>
            <person name="Silva D.W."/>
            <person name="Silva R."/>
            <person name="Simoes I.C."/>
            <person name="Simon D."/>
            <person name="Soares C.M.A."/>
            <person name="Soares R.B.A."/>
            <person name="Souza E.M."/>
            <person name="Souza K.R.L."/>
            <person name="Souza R.C."/>
            <person name="Steffens M.B.R."/>
            <person name="Steindel M."/>
            <person name="Teixeira S.R."/>
            <person name="Urmenyi T."/>
            <person name="Vettore A."/>
            <person name="Wassem R."/>
            <person name="Zaha A."/>
            <person name="Simpson A.J.G."/>
        </authorList>
    </citation>
    <scope>NUCLEOTIDE SEQUENCE [LARGE SCALE GENOMIC DNA]</scope>
    <source>
        <strain>ATCC 12472 / DSM 30191 / JCM 1249 / CCUG 213 / NBRC 12614 / NCIMB 9131 / NCTC 9757 / MK</strain>
    </source>
</reference>
<keyword id="KW-0004">4Fe-4S</keyword>
<keyword id="KW-0408">Iron</keyword>
<keyword id="KW-0411">Iron-sulfur</keyword>
<keyword id="KW-0414">Isoprene biosynthesis</keyword>
<keyword id="KW-0479">Metal-binding</keyword>
<keyword id="KW-0560">Oxidoreductase</keyword>
<keyword id="KW-1185">Reference proteome</keyword>
<name>ISPG_CHRVO</name>
<accession>Q7NS88</accession>
<feature type="chain" id="PRO_0000190562" description="4-hydroxy-3-methylbut-2-en-1-yl diphosphate synthase (flavodoxin)">
    <location>
        <begin position="1"/>
        <end position="427"/>
    </location>
</feature>
<feature type="binding site" evidence="1">
    <location>
        <position position="300"/>
    </location>
    <ligand>
        <name>[4Fe-4S] cluster</name>
        <dbReference type="ChEBI" id="CHEBI:49883"/>
    </ligand>
</feature>
<feature type="binding site" evidence="1">
    <location>
        <position position="303"/>
    </location>
    <ligand>
        <name>[4Fe-4S] cluster</name>
        <dbReference type="ChEBI" id="CHEBI:49883"/>
    </ligand>
</feature>
<feature type="binding site" evidence="1">
    <location>
        <position position="346"/>
    </location>
    <ligand>
        <name>[4Fe-4S] cluster</name>
        <dbReference type="ChEBI" id="CHEBI:49883"/>
    </ligand>
</feature>
<feature type="binding site" evidence="1">
    <location>
        <position position="353"/>
    </location>
    <ligand>
        <name>[4Fe-4S] cluster</name>
        <dbReference type="ChEBI" id="CHEBI:49883"/>
    </ligand>
</feature>
<protein>
    <recommendedName>
        <fullName evidence="1">4-hydroxy-3-methylbut-2-en-1-yl diphosphate synthase (flavodoxin)</fullName>
        <ecNumber evidence="1">1.17.7.3</ecNumber>
    </recommendedName>
    <alternativeName>
        <fullName evidence="1">1-hydroxy-2-methyl-2-(E)-butenyl 4-diphosphate synthase</fullName>
    </alternativeName>
</protein>
<proteinExistence type="inferred from homology"/>
<gene>
    <name evidence="1" type="primary">ispG</name>
    <name type="ordered locus">CV_3538</name>
</gene>
<dbReference type="EC" id="1.17.7.3" evidence="1"/>
<dbReference type="EMBL" id="AE016825">
    <property type="protein sequence ID" value="AAQ61200.1"/>
    <property type="molecule type" value="Genomic_DNA"/>
</dbReference>
<dbReference type="RefSeq" id="WP_011137085.1">
    <property type="nucleotide sequence ID" value="NC_005085.1"/>
</dbReference>
<dbReference type="SMR" id="Q7NS88"/>
<dbReference type="STRING" id="243365.CV_3538"/>
<dbReference type="KEGG" id="cvi:CV_3538"/>
<dbReference type="eggNOG" id="COG0821">
    <property type="taxonomic scope" value="Bacteria"/>
</dbReference>
<dbReference type="HOGENOM" id="CLU_042258_1_0_4"/>
<dbReference type="OrthoDB" id="9803214at2"/>
<dbReference type="UniPathway" id="UPA00056">
    <property type="reaction ID" value="UER00096"/>
</dbReference>
<dbReference type="Proteomes" id="UP000001424">
    <property type="component" value="Chromosome"/>
</dbReference>
<dbReference type="GO" id="GO:0051539">
    <property type="term" value="F:4 iron, 4 sulfur cluster binding"/>
    <property type="evidence" value="ECO:0007669"/>
    <property type="project" value="UniProtKB-UniRule"/>
</dbReference>
<dbReference type="GO" id="GO:0046429">
    <property type="term" value="F:4-hydroxy-3-methylbut-2-en-1-yl diphosphate synthase activity (ferredoxin)"/>
    <property type="evidence" value="ECO:0007669"/>
    <property type="project" value="UniProtKB-UniRule"/>
</dbReference>
<dbReference type="GO" id="GO:0141197">
    <property type="term" value="F:4-hydroxy-3-methylbut-2-enyl-diphosphate synthase activity (flavodoxin)"/>
    <property type="evidence" value="ECO:0007669"/>
    <property type="project" value="UniProtKB-EC"/>
</dbReference>
<dbReference type="GO" id="GO:0005506">
    <property type="term" value="F:iron ion binding"/>
    <property type="evidence" value="ECO:0007669"/>
    <property type="project" value="InterPro"/>
</dbReference>
<dbReference type="GO" id="GO:0019288">
    <property type="term" value="P:isopentenyl diphosphate biosynthetic process, methylerythritol 4-phosphate pathway"/>
    <property type="evidence" value="ECO:0007669"/>
    <property type="project" value="UniProtKB-UniRule"/>
</dbReference>
<dbReference type="GO" id="GO:0016114">
    <property type="term" value="P:terpenoid biosynthetic process"/>
    <property type="evidence" value="ECO:0007669"/>
    <property type="project" value="InterPro"/>
</dbReference>
<dbReference type="FunFam" id="3.30.413.10:FF:000012">
    <property type="entry name" value="4-hydroxy-3-methylbut-2-en-1-yl diphosphate synthase (flavodoxin)"/>
    <property type="match status" value="1"/>
</dbReference>
<dbReference type="Gene3D" id="3.20.20.20">
    <property type="entry name" value="Dihydropteroate synthase-like"/>
    <property type="match status" value="1"/>
</dbReference>
<dbReference type="Gene3D" id="3.30.413.10">
    <property type="entry name" value="Sulfite Reductase Hemoprotein, domain 1"/>
    <property type="match status" value="1"/>
</dbReference>
<dbReference type="HAMAP" id="MF_00159">
    <property type="entry name" value="IspG"/>
    <property type="match status" value="1"/>
</dbReference>
<dbReference type="InterPro" id="IPR011005">
    <property type="entry name" value="Dihydropteroate_synth-like_sf"/>
</dbReference>
<dbReference type="InterPro" id="IPR016425">
    <property type="entry name" value="IspG_bac"/>
</dbReference>
<dbReference type="InterPro" id="IPR004588">
    <property type="entry name" value="IspG_bac-typ"/>
</dbReference>
<dbReference type="InterPro" id="IPR045854">
    <property type="entry name" value="NO2/SO3_Rdtase_4Fe4S_sf"/>
</dbReference>
<dbReference type="NCBIfam" id="TIGR00612">
    <property type="entry name" value="ispG_gcpE"/>
    <property type="match status" value="1"/>
</dbReference>
<dbReference type="NCBIfam" id="NF001540">
    <property type="entry name" value="PRK00366.1"/>
    <property type="match status" value="1"/>
</dbReference>
<dbReference type="PANTHER" id="PTHR30454">
    <property type="entry name" value="4-HYDROXY-3-METHYLBUT-2-EN-1-YL DIPHOSPHATE SYNTHASE"/>
    <property type="match status" value="1"/>
</dbReference>
<dbReference type="PANTHER" id="PTHR30454:SF0">
    <property type="entry name" value="4-HYDROXY-3-METHYLBUT-2-EN-1-YL DIPHOSPHATE SYNTHASE (FERREDOXIN), CHLOROPLASTIC"/>
    <property type="match status" value="1"/>
</dbReference>
<dbReference type="Pfam" id="PF04551">
    <property type="entry name" value="GcpE"/>
    <property type="match status" value="1"/>
</dbReference>
<dbReference type="PIRSF" id="PIRSF004640">
    <property type="entry name" value="IspG"/>
    <property type="match status" value="1"/>
</dbReference>
<dbReference type="SUPFAM" id="SSF56014">
    <property type="entry name" value="Nitrite and sulphite reductase 4Fe-4S domain-like"/>
    <property type="match status" value="1"/>
</dbReference>
<evidence type="ECO:0000255" key="1">
    <source>
        <dbReference type="HAMAP-Rule" id="MF_00159"/>
    </source>
</evidence>
<organism>
    <name type="scientific">Chromobacterium violaceum (strain ATCC 12472 / DSM 30191 / JCM 1249 / CCUG 213 / NBRC 12614 / NCIMB 9131 / NCTC 9757 / MK)</name>
    <dbReference type="NCBI Taxonomy" id="243365"/>
    <lineage>
        <taxon>Bacteria</taxon>
        <taxon>Pseudomonadati</taxon>
        <taxon>Pseudomonadota</taxon>
        <taxon>Betaproteobacteria</taxon>
        <taxon>Neisseriales</taxon>
        <taxon>Chromobacteriaceae</taxon>
        <taxon>Chromobacterium</taxon>
    </lineage>
</organism>